<keyword id="KW-0328">Glycosyltransferase</keyword>
<keyword id="KW-0441">Lipid A biosynthesis</keyword>
<keyword id="KW-0444">Lipid biosynthesis</keyword>
<keyword id="KW-0443">Lipid metabolism</keyword>
<keyword id="KW-1185">Reference proteome</keyword>
<keyword id="KW-0808">Transferase</keyword>
<protein>
    <recommendedName>
        <fullName>Lipid-A-disaccharide synthase</fullName>
        <ecNumber>2.4.1.182</ecNumber>
    </recommendedName>
</protein>
<proteinExistence type="inferred from homology"/>
<gene>
    <name type="primary">lpxB</name>
    <name type="ordered locus">CT_411</name>
</gene>
<name>LPXB_CHLTR</name>
<sequence>MFPQKITLWLYPLGLFANLFFGTAFCVQWSLTRKKGYSVVPKIFWYLSGTGAVFMICHGFIQSQYPIALLHSFNLIIYFRNLNIASLNPLPVSKIASLLVSVATAITVSFAIGTRYLPHMTWMASPNILHLNLPEASLSWQLIGCIGLTIFSLRFFIQWFYLEYKNQSALPAPFWKASLLGGSICLLYFLRTGDLVNVLCYGCGLFPSLANLRIASREAFRKPFSNSCFISAGEHSGDTLGGNLLKEMHAKYPDIHCFGVGGPQMRAQNFHALFAMEKFQVSGFWEVLLALPKLWYRYQLLYRNILKTNPRTVICIDFPDFHFLLIKKLRSRGYKGKIVHYVCPSIWAWRPSRKTVLEKYLDLLLLILPFEQNLFKDSALRTVYLGHPLSETIKSFSPNLNWKDQLHLPTDKPFIAAFPGSRRSDILRNLTIQVQAFQASSLASTHHLLVSSANPEYDHLILEVLQQNRCLHSHIVPSQFRYELMRECDFALAKCGTIVLETALNLTPTIVTCQLRPLDTFLAKYIFNIILPAYSLPNIILGRTIFPEFIGGKKDFQYEDVAAALNILKTSQAQEKQKDSCRDVYQAINESASSMKECLSLIFETAS</sequence>
<feature type="chain" id="PRO_0000190161" description="Lipid-A-disaccharide synthase">
    <location>
        <begin position="1"/>
        <end position="607"/>
    </location>
</feature>
<feature type="region of interest" description="Unknown">
    <location>
        <begin position="1"/>
        <end position="224"/>
    </location>
</feature>
<feature type="region of interest" description="Lipid-A-disaccharide synthase">
    <location>
        <begin position="225"/>
        <end position="607"/>
    </location>
</feature>
<dbReference type="EC" id="2.4.1.182"/>
<dbReference type="EMBL" id="AE001273">
    <property type="protein sequence ID" value="AAC68008.1"/>
    <property type="molecule type" value="Genomic_DNA"/>
</dbReference>
<dbReference type="PIR" id="E71518">
    <property type="entry name" value="E71518"/>
</dbReference>
<dbReference type="RefSeq" id="NP_219921.1">
    <property type="nucleotide sequence ID" value="NC_000117.1"/>
</dbReference>
<dbReference type="RefSeq" id="WP_009871763.1">
    <property type="nucleotide sequence ID" value="NC_000117.1"/>
</dbReference>
<dbReference type="SMR" id="O84416"/>
<dbReference type="STRING" id="272561.CT_411"/>
<dbReference type="CAZy" id="GT19">
    <property type="family name" value="Glycosyltransferase Family 19"/>
</dbReference>
<dbReference type="EnsemblBacteria" id="AAC68008">
    <property type="protein sequence ID" value="AAC68008"/>
    <property type="gene ID" value="CT_411"/>
</dbReference>
<dbReference type="GeneID" id="884705"/>
<dbReference type="KEGG" id="ctr:CT_411"/>
<dbReference type="PATRIC" id="fig|272561.5.peg.442"/>
<dbReference type="HOGENOM" id="CLU_430672_0_0_0"/>
<dbReference type="InParanoid" id="O84416"/>
<dbReference type="OrthoDB" id="9801642at2"/>
<dbReference type="BRENDA" id="2.4.1.182">
    <property type="organism ID" value="1315"/>
</dbReference>
<dbReference type="UniPathway" id="UPA00973"/>
<dbReference type="Proteomes" id="UP000000431">
    <property type="component" value="Chromosome"/>
</dbReference>
<dbReference type="GO" id="GO:0016020">
    <property type="term" value="C:membrane"/>
    <property type="evidence" value="ECO:0007669"/>
    <property type="project" value="GOC"/>
</dbReference>
<dbReference type="GO" id="GO:0008915">
    <property type="term" value="F:lipid-A-disaccharide synthase activity"/>
    <property type="evidence" value="ECO:0007669"/>
    <property type="project" value="UniProtKB-UniRule"/>
</dbReference>
<dbReference type="GO" id="GO:0005543">
    <property type="term" value="F:phospholipid binding"/>
    <property type="evidence" value="ECO:0000318"/>
    <property type="project" value="GO_Central"/>
</dbReference>
<dbReference type="GO" id="GO:0009245">
    <property type="term" value="P:lipid A biosynthetic process"/>
    <property type="evidence" value="ECO:0000318"/>
    <property type="project" value="GO_Central"/>
</dbReference>
<dbReference type="Gene3D" id="3.40.50.2000">
    <property type="entry name" value="Glycogen Phosphorylase B"/>
    <property type="match status" value="1"/>
</dbReference>
<dbReference type="HAMAP" id="MF_00392">
    <property type="entry name" value="LpxB"/>
    <property type="match status" value="1"/>
</dbReference>
<dbReference type="InterPro" id="IPR003835">
    <property type="entry name" value="Glyco_trans_19"/>
</dbReference>
<dbReference type="InterPro" id="IPR011499">
    <property type="entry name" value="Lipid_A_biosynth_N"/>
</dbReference>
<dbReference type="NCBIfam" id="TIGR00215">
    <property type="entry name" value="lpxB"/>
    <property type="match status" value="1"/>
</dbReference>
<dbReference type="NCBIfam" id="NF002173">
    <property type="entry name" value="PRK01021.1"/>
    <property type="match status" value="1"/>
</dbReference>
<dbReference type="PANTHER" id="PTHR30372">
    <property type="entry name" value="LIPID-A-DISACCHARIDE SYNTHASE"/>
    <property type="match status" value="1"/>
</dbReference>
<dbReference type="PANTHER" id="PTHR30372:SF4">
    <property type="entry name" value="LIPID-A-DISACCHARIDE SYNTHASE, MITOCHONDRIAL-RELATED"/>
    <property type="match status" value="1"/>
</dbReference>
<dbReference type="Pfam" id="PF07578">
    <property type="entry name" value="LAB_N"/>
    <property type="match status" value="2"/>
</dbReference>
<dbReference type="Pfam" id="PF02684">
    <property type="entry name" value="LpxB"/>
    <property type="match status" value="1"/>
</dbReference>
<dbReference type="SMART" id="SM01259">
    <property type="entry name" value="LAB_N"/>
    <property type="match status" value="2"/>
</dbReference>
<dbReference type="SUPFAM" id="SSF53756">
    <property type="entry name" value="UDP-Glycosyltransferase/glycogen phosphorylase"/>
    <property type="match status" value="1"/>
</dbReference>
<comment type="function">
    <text evidence="1">Condensation of UDP-2,3-diacylglucosamine and 2,3-diacylglucosamine-1-phosphate to form lipid A disaccharide, a precursor of lipid A, a phosphorylated glycolipid that anchors the lipopolysaccharide to the outer membrane of the cell.</text>
</comment>
<comment type="catalytic activity">
    <reaction>
        <text>a lipid X + a UDP-2-N,3-O-bis[(3R)-3-hydroxyacyl]-alpha-D-glucosamine = a lipid A disaccharide + UDP + H(+)</text>
        <dbReference type="Rhea" id="RHEA:67828"/>
        <dbReference type="ChEBI" id="CHEBI:15378"/>
        <dbReference type="ChEBI" id="CHEBI:58223"/>
        <dbReference type="ChEBI" id="CHEBI:137748"/>
        <dbReference type="ChEBI" id="CHEBI:176338"/>
        <dbReference type="ChEBI" id="CHEBI:176343"/>
        <dbReference type="EC" id="2.4.1.182"/>
    </reaction>
</comment>
<comment type="pathway">
    <text>Bacterial outer membrane biogenesis; LPS lipid A biosynthesis.</text>
</comment>
<comment type="similarity">
    <text evidence="2">In the C-terminal section; belongs to the LpxB family.</text>
</comment>
<evidence type="ECO:0000250" key="1"/>
<evidence type="ECO:0000305" key="2"/>
<accession>O84416</accession>
<organism>
    <name type="scientific">Chlamydia trachomatis serovar D (strain ATCC VR-885 / DSM 19411 / UW-3/Cx)</name>
    <dbReference type="NCBI Taxonomy" id="272561"/>
    <lineage>
        <taxon>Bacteria</taxon>
        <taxon>Pseudomonadati</taxon>
        <taxon>Chlamydiota</taxon>
        <taxon>Chlamydiia</taxon>
        <taxon>Chlamydiales</taxon>
        <taxon>Chlamydiaceae</taxon>
        <taxon>Chlamydia/Chlamydophila group</taxon>
        <taxon>Chlamydia</taxon>
    </lineage>
</organism>
<reference key="1">
    <citation type="journal article" date="1998" name="Science">
        <title>Genome sequence of an obligate intracellular pathogen of humans: Chlamydia trachomatis.</title>
        <authorList>
            <person name="Stephens R.S."/>
            <person name="Kalman S."/>
            <person name="Lammel C.J."/>
            <person name="Fan J."/>
            <person name="Marathe R."/>
            <person name="Aravind L."/>
            <person name="Mitchell W.P."/>
            <person name="Olinger L."/>
            <person name="Tatusov R.L."/>
            <person name="Zhao Q."/>
            <person name="Koonin E.V."/>
            <person name="Davis R.W."/>
        </authorList>
    </citation>
    <scope>NUCLEOTIDE SEQUENCE [LARGE SCALE GENOMIC DNA]</scope>
    <source>
        <strain>ATCC VR-885 / DSM 19411 / UW-3/Cx</strain>
    </source>
</reference>